<evidence type="ECO:0000255" key="1">
    <source>
        <dbReference type="HAMAP-Rule" id="MF_00375"/>
    </source>
</evidence>
<reference key="1">
    <citation type="journal article" date="2003" name="Appl. Microbiol. Biotechnol.">
        <title>The Corynebacterium glutamicum genome: features and impacts on biotechnological processes.</title>
        <authorList>
            <person name="Ikeda M."/>
            <person name="Nakagawa S."/>
        </authorList>
    </citation>
    <scope>NUCLEOTIDE SEQUENCE [LARGE SCALE GENOMIC DNA]</scope>
    <source>
        <strain>ATCC 13032 / DSM 20300 / JCM 1318 / BCRC 11384 / CCUG 27702 / LMG 3730 / NBRC 12168 / NCIMB 10025 / NRRL B-2784 / 534</strain>
    </source>
</reference>
<reference key="2">
    <citation type="journal article" date="2003" name="J. Biotechnol.">
        <title>The complete Corynebacterium glutamicum ATCC 13032 genome sequence and its impact on the production of L-aspartate-derived amino acids and vitamins.</title>
        <authorList>
            <person name="Kalinowski J."/>
            <person name="Bathe B."/>
            <person name="Bartels D."/>
            <person name="Bischoff N."/>
            <person name="Bott M."/>
            <person name="Burkovski A."/>
            <person name="Dusch N."/>
            <person name="Eggeling L."/>
            <person name="Eikmanns B.J."/>
            <person name="Gaigalat L."/>
            <person name="Goesmann A."/>
            <person name="Hartmann M."/>
            <person name="Huthmacher K."/>
            <person name="Kraemer R."/>
            <person name="Linke B."/>
            <person name="McHardy A.C."/>
            <person name="Meyer F."/>
            <person name="Moeckel B."/>
            <person name="Pfefferle W."/>
            <person name="Puehler A."/>
            <person name="Rey D.A."/>
            <person name="Rueckert C."/>
            <person name="Rupp O."/>
            <person name="Sahm H."/>
            <person name="Wendisch V.F."/>
            <person name="Wiegraebe I."/>
            <person name="Tauch A."/>
        </authorList>
    </citation>
    <scope>NUCLEOTIDE SEQUENCE [LARGE SCALE GENOMIC DNA]</scope>
    <source>
        <strain>ATCC 13032 / DSM 20300 / JCM 1318 / BCRC 11384 / CCUG 27702 / LMG 3730 / NBRC 12168 / NCIMB 10025 / NRRL B-2784 / 534</strain>
    </source>
</reference>
<protein>
    <recommendedName>
        <fullName evidence="1">Glutamate-1-semialdehyde 2,1-aminomutase</fullName>
        <shortName evidence="1">GSA</shortName>
        <ecNumber evidence="1">5.4.3.8</ecNumber>
    </recommendedName>
    <alternativeName>
        <fullName evidence="1">Glutamate-1-semialdehyde aminotransferase</fullName>
        <shortName evidence="1">GSA-AT</shortName>
    </alternativeName>
</protein>
<gene>
    <name evidence="1" type="primary">hemL</name>
    <name type="ordered locus">Cgl0437</name>
    <name type="ordered locus">cg0518</name>
</gene>
<dbReference type="EC" id="5.4.3.8" evidence="1"/>
<dbReference type="EMBL" id="BA000036">
    <property type="protein sequence ID" value="BAB97830.1"/>
    <property type="molecule type" value="Genomic_DNA"/>
</dbReference>
<dbReference type="EMBL" id="BX927149">
    <property type="protein sequence ID" value="CAF19153.1"/>
    <property type="molecule type" value="Genomic_DNA"/>
</dbReference>
<dbReference type="RefSeq" id="NP_599684.1">
    <property type="nucleotide sequence ID" value="NC_003450.3"/>
</dbReference>
<dbReference type="SMR" id="Q8NT73"/>
<dbReference type="STRING" id="196627.cg0518"/>
<dbReference type="KEGG" id="cgb:cg0518"/>
<dbReference type="KEGG" id="cgl:Cgl0437"/>
<dbReference type="PATRIC" id="fig|196627.13.peg.436"/>
<dbReference type="eggNOG" id="COG0001">
    <property type="taxonomic scope" value="Bacteria"/>
</dbReference>
<dbReference type="HOGENOM" id="CLU_016922_1_5_11"/>
<dbReference type="OrthoDB" id="9801052at2"/>
<dbReference type="BioCyc" id="CORYNE:G18NG-9994-MONOMER"/>
<dbReference type="BRENDA" id="5.4.3.8">
    <property type="organism ID" value="960"/>
</dbReference>
<dbReference type="UniPathway" id="UPA00251">
    <property type="reaction ID" value="UER00317"/>
</dbReference>
<dbReference type="Proteomes" id="UP000000582">
    <property type="component" value="Chromosome"/>
</dbReference>
<dbReference type="Proteomes" id="UP000001009">
    <property type="component" value="Chromosome"/>
</dbReference>
<dbReference type="GO" id="GO:0005737">
    <property type="term" value="C:cytoplasm"/>
    <property type="evidence" value="ECO:0007669"/>
    <property type="project" value="UniProtKB-SubCell"/>
</dbReference>
<dbReference type="GO" id="GO:0042286">
    <property type="term" value="F:glutamate-1-semialdehyde 2,1-aminomutase activity"/>
    <property type="evidence" value="ECO:0007669"/>
    <property type="project" value="UniProtKB-UniRule"/>
</dbReference>
<dbReference type="GO" id="GO:0030170">
    <property type="term" value="F:pyridoxal phosphate binding"/>
    <property type="evidence" value="ECO:0007669"/>
    <property type="project" value="InterPro"/>
</dbReference>
<dbReference type="GO" id="GO:0008483">
    <property type="term" value="F:transaminase activity"/>
    <property type="evidence" value="ECO:0007669"/>
    <property type="project" value="InterPro"/>
</dbReference>
<dbReference type="GO" id="GO:0006782">
    <property type="term" value="P:protoporphyrinogen IX biosynthetic process"/>
    <property type="evidence" value="ECO:0007669"/>
    <property type="project" value="UniProtKB-UniRule"/>
</dbReference>
<dbReference type="CDD" id="cd00610">
    <property type="entry name" value="OAT_like"/>
    <property type="match status" value="1"/>
</dbReference>
<dbReference type="FunFam" id="3.40.640.10:FF:000021">
    <property type="entry name" value="Glutamate-1-semialdehyde 2,1-aminomutase"/>
    <property type="match status" value="1"/>
</dbReference>
<dbReference type="Gene3D" id="3.90.1150.10">
    <property type="entry name" value="Aspartate Aminotransferase, domain 1"/>
    <property type="match status" value="1"/>
</dbReference>
<dbReference type="Gene3D" id="3.40.640.10">
    <property type="entry name" value="Type I PLP-dependent aspartate aminotransferase-like (Major domain)"/>
    <property type="match status" value="1"/>
</dbReference>
<dbReference type="HAMAP" id="MF_00375">
    <property type="entry name" value="HemL_aminotrans_3"/>
    <property type="match status" value="1"/>
</dbReference>
<dbReference type="InterPro" id="IPR004639">
    <property type="entry name" value="4pyrrol_synth_GluAld_NH2Trfase"/>
</dbReference>
<dbReference type="InterPro" id="IPR005814">
    <property type="entry name" value="Aminotrans_3"/>
</dbReference>
<dbReference type="InterPro" id="IPR049704">
    <property type="entry name" value="Aminotrans_3_PPA_site"/>
</dbReference>
<dbReference type="InterPro" id="IPR015424">
    <property type="entry name" value="PyrdxlP-dep_Trfase"/>
</dbReference>
<dbReference type="InterPro" id="IPR015421">
    <property type="entry name" value="PyrdxlP-dep_Trfase_major"/>
</dbReference>
<dbReference type="InterPro" id="IPR015422">
    <property type="entry name" value="PyrdxlP-dep_Trfase_small"/>
</dbReference>
<dbReference type="NCBIfam" id="TIGR00713">
    <property type="entry name" value="hemL"/>
    <property type="match status" value="1"/>
</dbReference>
<dbReference type="NCBIfam" id="NF000818">
    <property type="entry name" value="PRK00062.1"/>
    <property type="match status" value="1"/>
</dbReference>
<dbReference type="PANTHER" id="PTHR43713">
    <property type="entry name" value="GLUTAMATE-1-SEMIALDEHYDE 2,1-AMINOMUTASE"/>
    <property type="match status" value="1"/>
</dbReference>
<dbReference type="PANTHER" id="PTHR43713:SF3">
    <property type="entry name" value="GLUTAMATE-1-SEMIALDEHYDE 2,1-AMINOMUTASE 1, CHLOROPLASTIC-RELATED"/>
    <property type="match status" value="1"/>
</dbReference>
<dbReference type="Pfam" id="PF00202">
    <property type="entry name" value="Aminotran_3"/>
    <property type="match status" value="1"/>
</dbReference>
<dbReference type="SUPFAM" id="SSF53383">
    <property type="entry name" value="PLP-dependent transferases"/>
    <property type="match status" value="1"/>
</dbReference>
<dbReference type="PROSITE" id="PS00600">
    <property type="entry name" value="AA_TRANSFER_CLASS_3"/>
    <property type="match status" value="1"/>
</dbReference>
<name>GSA_CORGL</name>
<organism>
    <name type="scientific">Corynebacterium glutamicum (strain ATCC 13032 / DSM 20300 / JCM 1318 / BCRC 11384 / CCUG 27702 / LMG 3730 / NBRC 12168 / NCIMB 10025 / NRRL B-2784 / 534)</name>
    <dbReference type="NCBI Taxonomy" id="196627"/>
    <lineage>
        <taxon>Bacteria</taxon>
        <taxon>Bacillati</taxon>
        <taxon>Actinomycetota</taxon>
        <taxon>Actinomycetes</taxon>
        <taxon>Mycobacteriales</taxon>
        <taxon>Corynebacteriaceae</taxon>
        <taxon>Corynebacterium</taxon>
    </lineage>
</organism>
<comment type="catalytic activity">
    <reaction evidence="1">
        <text>(S)-4-amino-5-oxopentanoate = 5-aminolevulinate</text>
        <dbReference type="Rhea" id="RHEA:14265"/>
        <dbReference type="ChEBI" id="CHEBI:57501"/>
        <dbReference type="ChEBI" id="CHEBI:356416"/>
        <dbReference type="EC" id="5.4.3.8"/>
    </reaction>
</comment>
<comment type="cofactor">
    <cofactor evidence="1">
        <name>pyridoxal 5'-phosphate</name>
        <dbReference type="ChEBI" id="CHEBI:597326"/>
    </cofactor>
</comment>
<comment type="pathway">
    <text evidence="1">Porphyrin-containing compound metabolism; protoporphyrin-IX biosynthesis; 5-aminolevulinate from L-glutamyl-tRNA(Glu): step 2/2.</text>
</comment>
<comment type="subunit">
    <text evidence="1">Homodimer.</text>
</comment>
<comment type="subcellular location">
    <subcellularLocation>
        <location evidence="1">Cytoplasm</location>
    </subcellularLocation>
</comment>
<comment type="similarity">
    <text evidence="1">Belongs to the class-III pyridoxal-phosphate-dependent aminotransferase family. HemL subfamily.</text>
</comment>
<accession>Q8NT73</accession>
<keyword id="KW-0963">Cytoplasm</keyword>
<keyword id="KW-0413">Isomerase</keyword>
<keyword id="KW-0627">Porphyrin biosynthesis</keyword>
<keyword id="KW-0663">Pyridoxal phosphate</keyword>
<keyword id="KW-1185">Reference proteome</keyword>
<feature type="chain" id="PRO_0000120406" description="Glutamate-1-semialdehyde 2,1-aminomutase">
    <location>
        <begin position="1"/>
        <end position="437"/>
    </location>
</feature>
<feature type="modified residue" description="N6-(pyridoxal phosphate)lysine" evidence="1">
    <location>
        <position position="272"/>
    </location>
</feature>
<proteinExistence type="inferred from homology"/>
<sequence>MTHMTSSNTARSAEWFEKAQKLTPGGVNSPVRAFGSVGGQARFIEKAHGSTLIDVDGNEYVDLVCSWGPMLMGHAHPAVVEAVQKAVVDGLSFGAPTIGEVELAQDIVKRTSVEEVRLVNSGTEATMSAVRLARGYTQRSKILKFEGCYHGHVDALLASAGSGVATFALPDSPGITGAQTSDTIVVPYNDIEAVRNAFAEYPGEIACIIAEAAGGNMGTVAPKDNFNDKLLAIAHADGALLILDEVMTGFRTSYRGWFGVDKVAADLVTFGKVVSGGLPAAAFGGKAEIMNMLAPQGPVYQAGTLSGNPVAVAAGRASLKLADESLYTTINANADRLHGLISDALTHEGVAHHIQRASNMLSIRFAEGEGHNFSDMKAADIFRFAPFFHTLLDNGVYAPPSVFETWFVSSALTDDDFSKIEQALKPAARAAAEAKAS</sequence>